<keyword id="KW-1185">Reference proteome</keyword>
<gene>
    <name type="primary">Plekhj1</name>
    <name type="synonym">Gnrpx</name>
</gene>
<name>PKHJ1_MOUSE</name>
<comment type="sequence caution" evidence="2">
    <conflict type="frameshift">
        <sequence resource="EMBL-CDS" id="BAC34743"/>
    </conflict>
</comment>
<accession>Q9D240</accession>
<accession>Q8BQ13</accession>
<accession>Q9EPF0</accession>
<evidence type="ECO:0000255" key="1">
    <source>
        <dbReference type="PROSITE-ProRule" id="PRU00145"/>
    </source>
</evidence>
<evidence type="ECO:0000305" key="2"/>
<protein>
    <recommendedName>
        <fullName>Pleckstrin homology domain-containing family J member 1</fullName>
        <shortName>PH domain-containing family J member 1</shortName>
    </recommendedName>
    <alternativeName>
        <fullName>Guanine nucleotide-releasing protein x</fullName>
    </alternativeName>
</protein>
<sequence>MRYNEKELQALSRQPAEMAAELGMRGPKKGSVAKRRLVKLVVNFLFYFRPDEAEPLGALLLERCRVAQEEPGGFSISFVEDLSRKYHFECCSQEQCQDWMEALQRASYEYMRQSLIFYRNEIRKMTGKDPLEQFGISEEARFQLNSLPKDGRTTCIGSQLNVLD</sequence>
<dbReference type="EMBL" id="AK020621">
    <property type="protein sequence ID" value="BAB32152.1"/>
    <property type="molecule type" value="mRNA"/>
</dbReference>
<dbReference type="EMBL" id="AK051734">
    <property type="protein sequence ID" value="BAC34743.1"/>
    <property type="status" value="ALT_FRAME"/>
    <property type="molecule type" value="mRNA"/>
</dbReference>
<dbReference type="EMBL" id="AK150144">
    <property type="protein sequence ID" value="BAE29339.1"/>
    <property type="molecule type" value="mRNA"/>
</dbReference>
<dbReference type="EMBL" id="BC005565">
    <property type="protein sequence ID" value="AAH05565.1"/>
    <property type="molecule type" value="mRNA"/>
</dbReference>
<dbReference type="EMBL" id="X83733">
    <property type="protein sequence ID" value="CAC10448.1"/>
    <property type="molecule type" value="Genomic_DNA"/>
</dbReference>
<dbReference type="CCDS" id="CCDS48640.1"/>
<dbReference type="RefSeq" id="NP_076389.2">
    <property type="nucleotide sequence ID" value="NM_023900.3"/>
</dbReference>
<dbReference type="SMR" id="Q9D240"/>
<dbReference type="FunCoup" id="Q9D240">
    <property type="interactions" value="712"/>
</dbReference>
<dbReference type="STRING" id="10090.ENSMUSP00000042334"/>
<dbReference type="iPTMnet" id="Q9D240"/>
<dbReference type="PhosphoSitePlus" id="Q9D240"/>
<dbReference type="PaxDb" id="10090-ENSMUSP00000042334"/>
<dbReference type="ProteomicsDB" id="289910"/>
<dbReference type="Antibodypedia" id="22945">
    <property type="antibodies" value="133 antibodies from 25 providers"/>
</dbReference>
<dbReference type="DNASU" id="78670"/>
<dbReference type="Ensembl" id="ENSMUST00000036805.7">
    <property type="protein sequence ID" value="ENSMUSP00000042334.6"/>
    <property type="gene ID" value="ENSMUSG00000035278.10"/>
</dbReference>
<dbReference type="GeneID" id="78670"/>
<dbReference type="KEGG" id="mmu:78670"/>
<dbReference type="UCSC" id="uc007ger.1">
    <property type="organism name" value="mouse"/>
</dbReference>
<dbReference type="AGR" id="MGI:1925920"/>
<dbReference type="CTD" id="55111"/>
<dbReference type="MGI" id="MGI:1925920">
    <property type="gene designation" value="Plekhj1"/>
</dbReference>
<dbReference type="VEuPathDB" id="HostDB:ENSMUSG00000035278"/>
<dbReference type="eggNOG" id="KOG0017">
    <property type="taxonomic scope" value="Eukaryota"/>
</dbReference>
<dbReference type="GeneTree" id="ENSGT00390000005235"/>
<dbReference type="HOGENOM" id="CLU_141382_0_0_1"/>
<dbReference type="InParanoid" id="Q9D240"/>
<dbReference type="OMA" id="EEQCKEW"/>
<dbReference type="PhylomeDB" id="Q9D240"/>
<dbReference type="TreeFam" id="TF331914"/>
<dbReference type="BioGRID-ORCS" id="78670">
    <property type="hits" value="4 hits in 76 CRISPR screens"/>
</dbReference>
<dbReference type="ChiTaRS" id="Plekhj1">
    <property type="organism name" value="mouse"/>
</dbReference>
<dbReference type="PRO" id="PR:Q9D240"/>
<dbReference type="Proteomes" id="UP000000589">
    <property type="component" value="Chromosome 10"/>
</dbReference>
<dbReference type="RNAct" id="Q9D240">
    <property type="molecule type" value="protein"/>
</dbReference>
<dbReference type="Bgee" id="ENSMUSG00000035278">
    <property type="expression patterns" value="Expressed in spermatocyte and 224 other cell types or tissues"/>
</dbReference>
<dbReference type="ExpressionAtlas" id="Q9D240">
    <property type="expression patterns" value="baseline and differential"/>
</dbReference>
<dbReference type="CDD" id="cd13258">
    <property type="entry name" value="PH_PLEKHJ1"/>
    <property type="match status" value="1"/>
</dbReference>
<dbReference type="FunFam" id="2.30.29.30:FF:000300">
    <property type="entry name" value="pleckstrin homology domain-containing family J member 1"/>
    <property type="match status" value="1"/>
</dbReference>
<dbReference type="Gene3D" id="2.30.29.30">
    <property type="entry name" value="Pleckstrin-homology domain (PH domain)/Phosphotyrosine-binding domain (PTB)"/>
    <property type="match status" value="1"/>
</dbReference>
<dbReference type="InterPro" id="IPR045188">
    <property type="entry name" value="Boi1/Boi2-like"/>
</dbReference>
<dbReference type="InterPro" id="IPR011993">
    <property type="entry name" value="PH-like_dom_sf"/>
</dbReference>
<dbReference type="InterPro" id="IPR001849">
    <property type="entry name" value="PH_domain"/>
</dbReference>
<dbReference type="PANTHER" id="PTHR22902:SF9">
    <property type="entry name" value="PLECKSTRIN HOMOLOGY DOMAIN-CONTAINING FAMILY J MEMBER 1"/>
    <property type="match status" value="1"/>
</dbReference>
<dbReference type="PANTHER" id="PTHR22902">
    <property type="entry name" value="SESQUIPEDALIAN"/>
    <property type="match status" value="1"/>
</dbReference>
<dbReference type="Pfam" id="PF00169">
    <property type="entry name" value="PH"/>
    <property type="match status" value="1"/>
</dbReference>
<dbReference type="SMART" id="SM00233">
    <property type="entry name" value="PH"/>
    <property type="match status" value="1"/>
</dbReference>
<dbReference type="SUPFAM" id="SSF50729">
    <property type="entry name" value="PH domain-like"/>
    <property type="match status" value="1"/>
</dbReference>
<dbReference type="PROSITE" id="PS50003">
    <property type="entry name" value="PH_DOMAIN"/>
    <property type="match status" value="1"/>
</dbReference>
<feature type="chain" id="PRO_0000309231" description="Pleckstrin homology domain-containing family J member 1">
    <location>
        <begin position="1"/>
        <end position="164"/>
    </location>
</feature>
<feature type="domain" description="PH" evidence="1">
    <location>
        <begin position="15"/>
        <end position="108"/>
    </location>
</feature>
<reference key="1">
    <citation type="journal article" date="2005" name="Science">
        <title>The transcriptional landscape of the mammalian genome.</title>
        <authorList>
            <person name="Carninci P."/>
            <person name="Kasukawa T."/>
            <person name="Katayama S."/>
            <person name="Gough J."/>
            <person name="Frith M.C."/>
            <person name="Maeda N."/>
            <person name="Oyama R."/>
            <person name="Ravasi T."/>
            <person name="Lenhard B."/>
            <person name="Wells C."/>
            <person name="Kodzius R."/>
            <person name="Shimokawa K."/>
            <person name="Bajic V.B."/>
            <person name="Brenner S.E."/>
            <person name="Batalov S."/>
            <person name="Forrest A.R."/>
            <person name="Zavolan M."/>
            <person name="Davis M.J."/>
            <person name="Wilming L.G."/>
            <person name="Aidinis V."/>
            <person name="Allen J.E."/>
            <person name="Ambesi-Impiombato A."/>
            <person name="Apweiler R."/>
            <person name="Aturaliya R.N."/>
            <person name="Bailey T.L."/>
            <person name="Bansal M."/>
            <person name="Baxter L."/>
            <person name="Beisel K.W."/>
            <person name="Bersano T."/>
            <person name="Bono H."/>
            <person name="Chalk A.M."/>
            <person name="Chiu K.P."/>
            <person name="Choudhary V."/>
            <person name="Christoffels A."/>
            <person name="Clutterbuck D.R."/>
            <person name="Crowe M.L."/>
            <person name="Dalla E."/>
            <person name="Dalrymple B.P."/>
            <person name="de Bono B."/>
            <person name="Della Gatta G."/>
            <person name="di Bernardo D."/>
            <person name="Down T."/>
            <person name="Engstrom P."/>
            <person name="Fagiolini M."/>
            <person name="Faulkner G."/>
            <person name="Fletcher C.F."/>
            <person name="Fukushima T."/>
            <person name="Furuno M."/>
            <person name="Futaki S."/>
            <person name="Gariboldi M."/>
            <person name="Georgii-Hemming P."/>
            <person name="Gingeras T.R."/>
            <person name="Gojobori T."/>
            <person name="Green R.E."/>
            <person name="Gustincich S."/>
            <person name="Harbers M."/>
            <person name="Hayashi Y."/>
            <person name="Hensch T.K."/>
            <person name="Hirokawa N."/>
            <person name="Hill D."/>
            <person name="Huminiecki L."/>
            <person name="Iacono M."/>
            <person name="Ikeo K."/>
            <person name="Iwama A."/>
            <person name="Ishikawa T."/>
            <person name="Jakt M."/>
            <person name="Kanapin A."/>
            <person name="Katoh M."/>
            <person name="Kawasawa Y."/>
            <person name="Kelso J."/>
            <person name="Kitamura H."/>
            <person name="Kitano H."/>
            <person name="Kollias G."/>
            <person name="Krishnan S.P."/>
            <person name="Kruger A."/>
            <person name="Kummerfeld S.K."/>
            <person name="Kurochkin I.V."/>
            <person name="Lareau L.F."/>
            <person name="Lazarevic D."/>
            <person name="Lipovich L."/>
            <person name="Liu J."/>
            <person name="Liuni S."/>
            <person name="McWilliam S."/>
            <person name="Madan Babu M."/>
            <person name="Madera M."/>
            <person name="Marchionni L."/>
            <person name="Matsuda H."/>
            <person name="Matsuzawa S."/>
            <person name="Miki H."/>
            <person name="Mignone F."/>
            <person name="Miyake S."/>
            <person name="Morris K."/>
            <person name="Mottagui-Tabar S."/>
            <person name="Mulder N."/>
            <person name="Nakano N."/>
            <person name="Nakauchi H."/>
            <person name="Ng P."/>
            <person name="Nilsson R."/>
            <person name="Nishiguchi S."/>
            <person name="Nishikawa S."/>
            <person name="Nori F."/>
            <person name="Ohara O."/>
            <person name="Okazaki Y."/>
            <person name="Orlando V."/>
            <person name="Pang K.C."/>
            <person name="Pavan W.J."/>
            <person name="Pavesi G."/>
            <person name="Pesole G."/>
            <person name="Petrovsky N."/>
            <person name="Piazza S."/>
            <person name="Reed J."/>
            <person name="Reid J.F."/>
            <person name="Ring B.Z."/>
            <person name="Ringwald M."/>
            <person name="Rost B."/>
            <person name="Ruan Y."/>
            <person name="Salzberg S.L."/>
            <person name="Sandelin A."/>
            <person name="Schneider C."/>
            <person name="Schoenbach C."/>
            <person name="Sekiguchi K."/>
            <person name="Semple C.A."/>
            <person name="Seno S."/>
            <person name="Sessa L."/>
            <person name="Sheng Y."/>
            <person name="Shibata Y."/>
            <person name="Shimada H."/>
            <person name="Shimada K."/>
            <person name="Silva D."/>
            <person name="Sinclair B."/>
            <person name="Sperling S."/>
            <person name="Stupka E."/>
            <person name="Sugiura K."/>
            <person name="Sultana R."/>
            <person name="Takenaka Y."/>
            <person name="Taki K."/>
            <person name="Tammoja K."/>
            <person name="Tan S.L."/>
            <person name="Tang S."/>
            <person name="Taylor M.S."/>
            <person name="Tegner J."/>
            <person name="Teichmann S.A."/>
            <person name="Ueda H.R."/>
            <person name="van Nimwegen E."/>
            <person name="Verardo R."/>
            <person name="Wei C.L."/>
            <person name="Yagi K."/>
            <person name="Yamanishi H."/>
            <person name="Zabarovsky E."/>
            <person name="Zhu S."/>
            <person name="Zimmer A."/>
            <person name="Hide W."/>
            <person name="Bult C."/>
            <person name="Grimmond S.M."/>
            <person name="Teasdale R.D."/>
            <person name="Liu E.T."/>
            <person name="Brusic V."/>
            <person name="Quackenbush J."/>
            <person name="Wahlestedt C."/>
            <person name="Mattick J.S."/>
            <person name="Hume D.A."/>
            <person name="Kai C."/>
            <person name="Sasaki D."/>
            <person name="Tomaru Y."/>
            <person name="Fukuda S."/>
            <person name="Kanamori-Katayama M."/>
            <person name="Suzuki M."/>
            <person name="Aoki J."/>
            <person name="Arakawa T."/>
            <person name="Iida J."/>
            <person name="Imamura K."/>
            <person name="Itoh M."/>
            <person name="Kato T."/>
            <person name="Kawaji H."/>
            <person name="Kawagashira N."/>
            <person name="Kawashima T."/>
            <person name="Kojima M."/>
            <person name="Kondo S."/>
            <person name="Konno H."/>
            <person name="Nakano K."/>
            <person name="Ninomiya N."/>
            <person name="Nishio T."/>
            <person name="Okada M."/>
            <person name="Plessy C."/>
            <person name="Shibata K."/>
            <person name="Shiraki T."/>
            <person name="Suzuki S."/>
            <person name="Tagami M."/>
            <person name="Waki K."/>
            <person name="Watahiki A."/>
            <person name="Okamura-Oho Y."/>
            <person name="Suzuki H."/>
            <person name="Kawai J."/>
            <person name="Hayashizaki Y."/>
        </authorList>
    </citation>
    <scope>NUCLEOTIDE SEQUENCE [LARGE SCALE MRNA]</scope>
    <source>
        <strain>C57BL/6J</strain>
        <tissue>Bone marrow</tissue>
        <tissue>Spinal ganglion</tissue>
        <tissue>Urinary bladder</tissue>
    </source>
</reference>
<reference key="2">
    <citation type="journal article" date="2004" name="Genome Res.">
        <title>The status, quality, and expansion of the NIH full-length cDNA project: the Mammalian Gene Collection (MGC).</title>
        <authorList>
            <consortium name="The MGC Project Team"/>
        </authorList>
    </citation>
    <scope>NUCLEOTIDE SEQUENCE [LARGE SCALE MRNA]</scope>
    <source>
        <strain>FVB/N</strain>
        <tissue>Mammary tumor</tissue>
    </source>
</reference>
<reference key="3">
    <citation type="journal article" date="2001" name="Gene">
        <title>An expressed GNRP-like gene shares a bi-directional promoter with SF3A2 (SAP62) immediately upstream of AMH.</title>
        <authorList>
            <person name="Dresser D.W."/>
            <person name="Jamin S.P."/>
            <person name="Atkins C.J."/>
            <person name="Guerrier D."/>
        </authorList>
    </citation>
    <scope>NUCLEOTIDE SEQUENCE [GENOMIC DNA] OF 1-121</scope>
    <source>
        <strain>129</strain>
    </source>
</reference>
<proteinExistence type="evidence at transcript level"/>
<organism>
    <name type="scientific">Mus musculus</name>
    <name type="common">Mouse</name>
    <dbReference type="NCBI Taxonomy" id="10090"/>
    <lineage>
        <taxon>Eukaryota</taxon>
        <taxon>Metazoa</taxon>
        <taxon>Chordata</taxon>
        <taxon>Craniata</taxon>
        <taxon>Vertebrata</taxon>
        <taxon>Euteleostomi</taxon>
        <taxon>Mammalia</taxon>
        <taxon>Eutheria</taxon>
        <taxon>Euarchontoglires</taxon>
        <taxon>Glires</taxon>
        <taxon>Rodentia</taxon>
        <taxon>Myomorpha</taxon>
        <taxon>Muroidea</taxon>
        <taxon>Muridae</taxon>
        <taxon>Murinae</taxon>
        <taxon>Mus</taxon>
        <taxon>Mus</taxon>
    </lineage>
</organism>